<keyword id="KW-0025">Alternative splicing</keyword>
<keyword id="KW-1015">Disulfide bond</keyword>
<keyword id="KW-0256">Endoplasmic reticulum</keyword>
<keyword id="KW-0325">Glycoprotein</keyword>
<keyword id="KW-0413">Isomerase</keyword>
<keyword id="KW-0676">Redox-active center</keyword>
<keyword id="KW-1185">Reference proteome</keyword>
<keyword id="KW-0677">Repeat</keyword>
<keyword id="KW-0732">Signal</keyword>
<keyword id="KW-0926">Vacuole</keyword>
<name>PDI11_ARATH</name>
<evidence type="ECO:0000250" key="1"/>
<evidence type="ECO:0000255" key="2"/>
<evidence type="ECO:0000255" key="3">
    <source>
        <dbReference type="PROSITE-ProRule" id="PRU00691"/>
    </source>
</evidence>
<evidence type="ECO:0000255" key="4">
    <source>
        <dbReference type="PROSITE-ProRule" id="PRU10138"/>
    </source>
</evidence>
<evidence type="ECO:0000269" key="5">
    <source>
    </source>
</evidence>
<evidence type="ECO:0000269" key="6">
    <source>
    </source>
</evidence>
<evidence type="ECO:0000305" key="7"/>
<gene>
    <name type="primary">PDIL1-1</name>
    <name type="synonym">PDI5</name>
    <name type="ordered locus">At1g21750</name>
    <name type="ORF">F8K7.19</name>
</gene>
<dbReference type="EC" id="5.3.4.1"/>
<dbReference type="EMBL" id="AC007727">
    <property type="protein sequence ID" value="AAD41430.1"/>
    <property type="molecule type" value="Genomic_DNA"/>
</dbReference>
<dbReference type="EMBL" id="CP002684">
    <property type="protein sequence ID" value="AEE30151.1"/>
    <property type="molecule type" value="Genomic_DNA"/>
</dbReference>
<dbReference type="EMBL" id="AY035096">
    <property type="protein sequence ID" value="AAK59601.1"/>
    <property type="molecule type" value="mRNA"/>
</dbReference>
<dbReference type="EMBL" id="AY063059">
    <property type="protein sequence ID" value="AAL34233.1"/>
    <property type="molecule type" value="mRNA"/>
</dbReference>
<dbReference type="PIR" id="B86351">
    <property type="entry name" value="B86351"/>
</dbReference>
<dbReference type="RefSeq" id="NP_173594.1">
    <molecule id="Q9XI01-1"/>
    <property type="nucleotide sequence ID" value="NM_102024.4"/>
</dbReference>
<dbReference type="SMR" id="Q9XI01"/>
<dbReference type="BioGRID" id="24018">
    <property type="interactions" value="14"/>
</dbReference>
<dbReference type="FunCoup" id="Q9XI01">
    <property type="interactions" value="1974"/>
</dbReference>
<dbReference type="IntAct" id="Q9XI01">
    <property type="interactions" value="5"/>
</dbReference>
<dbReference type="STRING" id="3702.Q9XI01"/>
<dbReference type="GlyCosmos" id="Q9XI01">
    <property type="glycosylation" value="2 sites, No reported glycans"/>
</dbReference>
<dbReference type="GlyGen" id="Q9XI01">
    <property type="glycosylation" value="2 sites"/>
</dbReference>
<dbReference type="iPTMnet" id="Q9XI01"/>
<dbReference type="SwissPalm" id="Q9XI01"/>
<dbReference type="PaxDb" id="3702-AT1G21750.1"/>
<dbReference type="ProteomicsDB" id="236717">
    <molecule id="Q9XI01-1"/>
</dbReference>
<dbReference type="EnsemblPlants" id="AT1G21750.1">
    <molecule id="Q9XI01-1"/>
    <property type="protein sequence ID" value="AT1G21750.1"/>
    <property type="gene ID" value="AT1G21750"/>
</dbReference>
<dbReference type="GeneID" id="838779"/>
<dbReference type="Gramene" id="AT1G21750.1">
    <molecule id="Q9XI01-1"/>
    <property type="protein sequence ID" value="AT1G21750.1"/>
    <property type="gene ID" value="AT1G21750"/>
</dbReference>
<dbReference type="KEGG" id="ath:AT1G21750"/>
<dbReference type="Araport" id="AT1G21750"/>
<dbReference type="TAIR" id="AT1G21750">
    <property type="gene designation" value="PDIL1-1"/>
</dbReference>
<dbReference type="eggNOG" id="KOG0190">
    <property type="taxonomic scope" value="Eukaryota"/>
</dbReference>
<dbReference type="HOGENOM" id="CLU_025879_6_1_1"/>
<dbReference type="InParanoid" id="Q9XI01"/>
<dbReference type="OMA" id="FFGMKKD"/>
<dbReference type="PhylomeDB" id="Q9XI01"/>
<dbReference type="CD-CODE" id="4299E36E">
    <property type="entry name" value="Nucleolus"/>
</dbReference>
<dbReference type="PRO" id="PR:Q9XI01"/>
<dbReference type="Proteomes" id="UP000006548">
    <property type="component" value="Chromosome 1"/>
</dbReference>
<dbReference type="ExpressionAtlas" id="Q9XI01">
    <property type="expression patterns" value="baseline and differential"/>
</dbReference>
<dbReference type="GO" id="GO:0005783">
    <property type="term" value="C:endoplasmic reticulum"/>
    <property type="evidence" value="ECO:0007005"/>
    <property type="project" value="TAIR"/>
</dbReference>
<dbReference type="GO" id="GO:0005788">
    <property type="term" value="C:endoplasmic reticulum lumen"/>
    <property type="evidence" value="ECO:0007669"/>
    <property type="project" value="UniProtKB-SubCell"/>
</dbReference>
<dbReference type="GO" id="GO:0000327">
    <property type="term" value="C:lytic vacuole within protein storage vacuole"/>
    <property type="evidence" value="ECO:0000314"/>
    <property type="project" value="TAIR"/>
</dbReference>
<dbReference type="GO" id="GO:0005634">
    <property type="term" value="C:nucleus"/>
    <property type="evidence" value="ECO:0007005"/>
    <property type="project" value="TAIR"/>
</dbReference>
<dbReference type="GO" id="GO:0000325">
    <property type="term" value="C:plant-type vacuole"/>
    <property type="evidence" value="ECO:0007005"/>
    <property type="project" value="TAIR"/>
</dbReference>
<dbReference type="GO" id="GO:0000326">
    <property type="term" value="C:protein storage vacuole"/>
    <property type="evidence" value="ECO:0000314"/>
    <property type="project" value="TAIR"/>
</dbReference>
<dbReference type="GO" id="GO:0099503">
    <property type="term" value="C:secretory vesicle"/>
    <property type="evidence" value="ECO:0007005"/>
    <property type="project" value="TAIR"/>
</dbReference>
<dbReference type="GO" id="GO:0009579">
    <property type="term" value="C:thylakoid"/>
    <property type="evidence" value="ECO:0007005"/>
    <property type="project" value="TAIR"/>
</dbReference>
<dbReference type="GO" id="GO:0003756">
    <property type="term" value="F:protein disulfide isomerase activity"/>
    <property type="evidence" value="ECO:0000250"/>
    <property type="project" value="TAIR"/>
</dbReference>
<dbReference type="GO" id="GO:0009793">
    <property type="term" value="P:embryo development ending in seed dormancy"/>
    <property type="evidence" value="ECO:0000315"/>
    <property type="project" value="TAIR"/>
</dbReference>
<dbReference type="GO" id="GO:0043067">
    <property type="term" value="P:regulation of programmed cell death"/>
    <property type="evidence" value="ECO:0000315"/>
    <property type="project" value="TAIR"/>
</dbReference>
<dbReference type="GO" id="GO:0034976">
    <property type="term" value="P:response to endoplasmic reticulum stress"/>
    <property type="evidence" value="ECO:0000270"/>
    <property type="project" value="TAIR"/>
</dbReference>
<dbReference type="GO" id="GO:0010043">
    <property type="term" value="P:response to zinc ion"/>
    <property type="evidence" value="ECO:0000270"/>
    <property type="project" value="TAIR"/>
</dbReference>
<dbReference type="GO" id="GO:0048316">
    <property type="term" value="P:seed development"/>
    <property type="evidence" value="ECO:0000315"/>
    <property type="project" value="TAIR"/>
</dbReference>
<dbReference type="CDD" id="cd02961">
    <property type="entry name" value="PDI_a_family"/>
    <property type="match status" value="1"/>
</dbReference>
<dbReference type="CDD" id="cd02995">
    <property type="entry name" value="PDI_a_PDI_a'_C"/>
    <property type="match status" value="1"/>
</dbReference>
<dbReference type="CDD" id="cd02982">
    <property type="entry name" value="PDI_b'_family"/>
    <property type="match status" value="1"/>
</dbReference>
<dbReference type="CDD" id="cd02981">
    <property type="entry name" value="PDI_b_family"/>
    <property type="match status" value="1"/>
</dbReference>
<dbReference type="FunFam" id="3.40.30.10:FF:000143">
    <property type="entry name" value="Protein disulfide-isomerase"/>
    <property type="match status" value="1"/>
</dbReference>
<dbReference type="FunFam" id="3.40.30.10:FF:000150">
    <property type="entry name" value="Protein disulfide-isomerase"/>
    <property type="match status" value="1"/>
</dbReference>
<dbReference type="FunFam" id="3.40.30.10:FF:000152">
    <property type="entry name" value="Protein disulfide-isomerase"/>
    <property type="match status" value="1"/>
</dbReference>
<dbReference type="FunFam" id="3.40.30.10:FF:000184">
    <property type="entry name" value="Protein disulfide-isomerase"/>
    <property type="match status" value="1"/>
</dbReference>
<dbReference type="Gene3D" id="3.40.30.10">
    <property type="entry name" value="Glutaredoxin"/>
    <property type="match status" value="4"/>
</dbReference>
<dbReference type="InterPro" id="IPR005788">
    <property type="entry name" value="PDI_thioredoxin-like_dom"/>
</dbReference>
<dbReference type="InterPro" id="IPR005792">
    <property type="entry name" value="Prot_disulphide_isomerase"/>
</dbReference>
<dbReference type="InterPro" id="IPR036249">
    <property type="entry name" value="Thioredoxin-like_sf"/>
</dbReference>
<dbReference type="InterPro" id="IPR017937">
    <property type="entry name" value="Thioredoxin_CS"/>
</dbReference>
<dbReference type="InterPro" id="IPR013766">
    <property type="entry name" value="Thioredoxin_domain"/>
</dbReference>
<dbReference type="NCBIfam" id="TIGR01130">
    <property type="entry name" value="ER_PDI_fam"/>
    <property type="match status" value="1"/>
</dbReference>
<dbReference type="NCBIfam" id="TIGR01126">
    <property type="entry name" value="pdi_dom"/>
    <property type="match status" value="2"/>
</dbReference>
<dbReference type="PANTHER" id="PTHR18929">
    <property type="entry name" value="PROTEIN DISULFIDE ISOMERASE"/>
    <property type="match status" value="1"/>
</dbReference>
<dbReference type="PANTHER" id="PTHR18929:SF132">
    <property type="entry name" value="PROTEIN DISULFIDE-ISOMERASE A3"/>
    <property type="match status" value="1"/>
</dbReference>
<dbReference type="Pfam" id="PF00085">
    <property type="entry name" value="Thioredoxin"/>
    <property type="match status" value="2"/>
</dbReference>
<dbReference type="Pfam" id="PF13848">
    <property type="entry name" value="Thioredoxin_6"/>
    <property type="match status" value="1"/>
</dbReference>
<dbReference type="PRINTS" id="PR00421">
    <property type="entry name" value="THIOREDOXIN"/>
</dbReference>
<dbReference type="SUPFAM" id="SSF52833">
    <property type="entry name" value="Thioredoxin-like"/>
    <property type="match status" value="4"/>
</dbReference>
<dbReference type="PROSITE" id="PS00014">
    <property type="entry name" value="ER_TARGET"/>
    <property type="match status" value="1"/>
</dbReference>
<dbReference type="PROSITE" id="PS00194">
    <property type="entry name" value="THIOREDOXIN_1"/>
    <property type="match status" value="2"/>
</dbReference>
<dbReference type="PROSITE" id="PS51352">
    <property type="entry name" value="THIOREDOXIN_2"/>
    <property type="match status" value="2"/>
</dbReference>
<protein>
    <recommendedName>
        <fullName>Protein disulfide isomerase-like 1-1</fullName>
        <shortName>AtPDIL1-1</shortName>
        <ecNumber>5.3.4.1</ecNumber>
    </recommendedName>
    <alternativeName>
        <fullName>Protein disulfide-isomerase 1</fullName>
        <shortName>PDI 1</shortName>
    </alternativeName>
    <alternativeName>
        <fullName>Protein disulfide-isomerase 5</fullName>
        <shortName>AtPDI5</shortName>
    </alternativeName>
</protein>
<accession>Q9XI01</accession>
<sequence>MAMRGFTLFSILVLSLCASSIRSEETETKEFVLTLDHTNFTDTINKHDFIVVEFYAPWCGHCKQLAPEYEKAASALSSNVPPVVLAKIDASEETNREFATQYEVQGFPTIKIFRNGGKAVQEYNGPREAEGIVTYLKKQSGPASAEIKSADDASEVVSDKKVVVVGIFPKLSGSEFDSFMAIAEKLRSELDFAHTSDAKLLPRGESSVTGPVVRLFKPFDEQFVDSKDFDGEALEKFVKESSIPLITVFDKDPNNHPYVIKFFESTNTKAMLFINFTGEGAESLKSKYREVATSNKGQGLSFLLGDAENSQGAFQYFGLEESQVPLIIIQTADDKKYLKTNVEVDQIESWVKDFKDGKIAPHKKSQPIPAENNEPVKVVVSDSLDDIVLNSGKNVLLEFYAPWCGHCQKLAPILDEVAVSYQSDSSVVIAKLDATANDFPKDTFDVKGFPTIYFKSASGNVVVYEGDRTKEDFISFVDKNKDTVGEPKKEEETTEEVKDEL</sequence>
<feature type="signal peptide" evidence="2">
    <location>
        <begin position="1"/>
        <end position="23"/>
    </location>
</feature>
<feature type="chain" id="PRO_0000034205" description="Protein disulfide isomerase-like 1-1">
    <location>
        <begin position="24"/>
        <end position="501"/>
    </location>
</feature>
<feature type="domain" description="Thioredoxin 1" evidence="3">
    <location>
        <begin position="24"/>
        <end position="141"/>
    </location>
</feature>
<feature type="domain" description="Thioredoxin 2" evidence="3">
    <location>
        <begin position="354"/>
        <end position="482"/>
    </location>
</feature>
<feature type="short sequence motif" description="Prevents secretion from ER" evidence="4">
    <location>
        <begin position="498"/>
        <end position="501"/>
    </location>
</feature>
<feature type="active site" description="Nucleophile" evidence="1">
    <location>
        <position position="59"/>
    </location>
</feature>
<feature type="active site" description="Nucleophile" evidence="1">
    <location>
        <position position="62"/>
    </location>
</feature>
<feature type="active site" description="Nucleophile" evidence="1">
    <location>
        <position position="404"/>
    </location>
</feature>
<feature type="active site" description="Nucleophile" evidence="1">
    <location>
        <position position="407"/>
    </location>
</feature>
<feature type="site" description="Contributes to redox potential value" evidence="1">
    <location>
        <position position="60"/>
    </location>
</feature>
<feature type="site" description="Contributes to redox potential value" evidence="1">
    <location>
        <position position="61"/>
    </location>
</feature>
<feature type="site" description="Lowers pKa of C-terminal Cys of first active site" evidence="1">
    <location>
        <position position="127"/>
    </location>
</feature>
<feature type="site" description="Contributes to redox potential value" evidence="1">
    <location>
        <position position="405"/>
    </location>
</feature>
<feature type="site" description="Contributes to redox potential value" evidence="1">
    <location>
        <position position="406"/>
    </location>
</feature>
<feature type="site" description="Lowers pKa of C-terminal Cys of second active site" evidence="1">
    <location>
        <position position="468"/>
    </location>
</feature>
<feature type="glycosylation site" description="N-linked (GlcNAc...) asparagine" evidence="2">
    <location>
        <position position="39"/>
    </location>
</feature>
<feature type="glycosylation site" description="N-linked (GlcNAc...) asparagine" evidence="2">
    <location>
        <position position="275"/>
    </location>
</feature>
<feature type="disulfide bond" description="Redox-active" evidence="3">
    <location>
        <begin position="59"/>
        <end position="62"/>
    </location>
</feature>
<feature type="disulfide bond" description="Redox-active" evidence="3">
    <location>
        <begin position="404"/>
        <end position="407"/>
    </location>
</feature>
<reference key="1">
    <citation type="journal article" date="2000" name="Nature">
        <title>Sequence and analysis of chromosome 1 of the plant Arabidopsis thaliana.</title>
        <authorList>
            <person name="Theologis A."/>
            <person name="Ecker J.R."/>
            <person name="Palm C.J."/>
            <person name="Federspiel N.A."/>
            <person name="Kaul S."/>
            <person name="White O."/>
            <person name="Alonso J."/>
            <person name="Altafi H."/>
            <person name="Araujo R."/>
            <person name="Bowman C.L."/>
            <person name="Brooks S.Y."/>
            <person name="Buehler E."/>
            <person name="Chan A."/>
            <person name="Chao Q."/>
            <person name="Chen H."/>
            <person name="Cheuk R.F."/>
            <person name="Chin C.W."/>
            <person name="Chung M.K."/>
            <person name="Conn L."/>
            <person name="Conway A.B."/>
            <person name="Conway A.R."/>
            <person name="Creasy T.H."/>
            <person name="Dewar K."/>
            <person name="Dunn P."/>
            <person name="Etgu P."/>
            <person name="Feldblyum T.V."/>
            <person name="Feng J.-D."/>
            <person name="Fong B."/>
            <person name="Fujii C.Y."/>
            <person name="Gill J.E."/>
            <person name="Goldsmith A.D."/>
            <person name="Haas B."/>
            <person name="Hansen N.F."/>
            <person name="Hughes B."/>
            <person name="Huizar L."/>
            <person name="Hunter J.L."/>
            <person name="Jenkins J."/>
            <person name="Johnson-Hopson C."/>
            <person name="Khan S."/>
            <person name="Khaykin E."/>
            <person name="Kim C.J."/>
            <person name="Koo H.L."/>
            <person name="Kremenetskaia I."/>
            <person name="Kurtz D.B."/>
            <person name="Kwan A."/>
            <person name="Lam B."/>
            <person name="Langin-Hooper S."/>
            <person name="Lee A."/>
            <person name="Lee J.M."/>
            <person name="Lenz C.A."/>
            <person name="Li J.H."/>
            <person name="Li Y.-P."/>
            <person name="Lin X."/>
            <person name="Liu S.X."/>
            <person name="Liu Z.A."/>
            <person name="Luros J.S."/>
            <person name="Maiti R."/>
            <person name="Marziali A."/>
            <person name="Militscher J."/>
            <person name="Miranda M."/>
            <person name="Nguyen M."/>
            <person name="Nierman W.C."/>
            <person name="Osborne B.I."/>
            <person name="Pai G."/>
            <person name="Peterson J."/>
            <person name="Pham P.K."/>
            <person name="Rizzo M."/>
            <person name="Rooney T."/>
            <person name="Rowley D."/>
            <person name="Sakano H."/>
            <person name="Salzberg S.L."/>
            <person name="Schwartz J.R."/>
            <person name="Shinn P."/>
            <person name="Southwick A.M."/>
            <person name="Sun H."/>
            <person name="Tallon L.J."/>
            <person name="Tambunga G."/>
            <person name="Toriumi M.J."/>
            <person name="Town C.D."/>
            <person name="Utterback T."/>
            <person name="Van Aken S."/>
            <person name="Vaysberg M."/>
            <person name="Vysotskaia V.S."/>
            <person name="Walker M."/>
            <person name="Wu D."/>
            <person name="Yu G."/>
            <person name="Fraser C.M."/>
            <person name="Venter J.C."/>
            <person name="Davis R.W."/>
        </authorList>
    </citation>
    <scope>NUCLEOTIDE SEQUENCE [LARGE SCALE GENOMIC DNA]</scope>
    <source>
        <strain>cv. Columbia</strain>
    </source>
</reference>
<reference key="2">
    <citation type="journal article" date="2017" name="Plant J.">
        <title>Araport11: a complete reannotation of the Arabidopsis thaliana reference genome.</title>
        <authorList>
            <person name="Cheng C.Y."/>
            <person name="Krishnakumar V."/>
            <person name="Chan A.P."/>
            <person name="Thibaud-Nissen F."/>
            <person name="Schobel S."/>
            <person name="Town C.D."/>
        </authorList>
    </citation>
    <scope>GENOME REANNOTATION</scope>
    <source>
        <strain>cv. Columbia</strain>
    </source>
</reference>
<reference key="3">
    <citation type="journal article" date="2003" name="Science">
        <title>Empirical analysis of transcriptional activity in the Arabidopsis genome.</title>
        <authorList>
            <person name="Yamada K."/>
            <person name="Lim J."/>
            <person name="Dale J.M."/>
            <person name="Chen H."/>
            <person name="Shinn P."/>
            <person name="Palm C.J."/>
            <person name="Southwick A.M."/>
            <person name="Wu H.C."/>
            <person name="Kim C.J."/>
            <person name="Nguyen M."/>
            <person name="Pham P.K."/>
            <person name="Cheuk R.F."/>
            <person name="Karlin-Newmann G."/>
            <person name="Liu S.X."/>
            <person name="Lam B."/>
            <person name="Sakano H."/>
            <person name="Wu T."/>
            <person name="Yu G."/>
            <person name="Miranda M."/>
            <person name="Quach H.L."/>
            <person name="Tripp M."/>
            <person name="Chang C.H."/>
            <person name="Lee J.M."/>
            <person name="Toriumi M.J."/>
            <person name="Chan M.M."/>
            <person name="Tang C.C."/>
            <person name="Onodera C.S."/>
            <person name="Deng J.M."/>
            <person name="Akiyama K."/>
            <person name="Ansari Y."/>
            <person name="Arakawa T."/>
            <person name="Banh J."/>
            <person name="Banno F."/>
            <person name="Bowser L."/>
            <person name="Brooks S.Y."/>
            <person name="Carninci P."/>
            <person name="Chao Q."/>
            <person name="Choy N."/>
            <person name="Enju A."/>
            <person name="Goldsmith A.D."/>
            <person name="Gurjal M."/>
            <person name="Hansen N.F."/>
            <person name="Hayashizaki Y."/>
            <person name="Johnson-Hopson C."/>
            <person name="Hsuan V.W."/>
            <person name="Iida K."/>
            <person name="Karnes M."/>
            <person name="Khan S."/>
            <person name="Koesema E."/>
            <person name="Ishida J."/>
            <person name="Jiang P.X."/>
            <person name="Jones T."/>
            <person name="Kawai J."/>
            <person name="Kamiya A."/>
            <person name="Meyers C."/>
            <person name="Nakajima M."/>
            <person name="Narusaka M."/>
            <person name="Seki M."/>
            <person name="Sakurai T."/>
            <person name="Satou M."/>
            <person name="Tamse R."/>
            <person name="Vaysberg M."/>
            <person name="Wallender E.K."/>
            <person name="Wong C."/>
            <person name="Yamamura Y."/>
            <person name="Yuan S."/>
            <person name="Shinozaki K."/>
            <person name="Davis R.W."/>
            <person name="Theologis A."/>
            <person name="Ecker J.R."/>
        </authorList>
    </citation>
    <scope>NUCLEOTIDE SEQUENCE [LARGE SCALE MRNA]</scope>
    <source>
        <strain>cv. Columbia</strain>
    </source>
</reference>
<reference key="4">
    <citation type="journal article" date="2005" name="Plant Physiol.">
        <title>Phylogenetic analyses identify 10 classes of the protein disulfide isomerase family in plants, including single-domain protein disulfide isomerase-related proteins.</title>
        <authorList>
            <person name="Houston N.L."/>
            <person name="Fan C."/>
            <person name="Xiang J.Q."/>
            <person name="Schulze J.M."/>
            <person name="Jung R."/>
            <person name="Boston R.S."/>
        </authorList>
    </citation>
    <scope>GENE FAMILY</scope>
    <scope>NOMENCLATURE</scope>
</reference>
<reference key="5">
    <citation type="journal article" date="2008" name="Mol. Genet. Genomics">
        <title>Endoplasmic reticulum stress activates the expression of a sub-group of protein disulfide isomerase genes and AtbZIP60 modulates the response in Arabidopsis thaliana.</title>
        <authorList>
            <person name="Lu D.-P."/>
            <person name="Christopher D.A."/>
        </authorList>
    </citation>
    <scope>TISSUE SPECIFICITY</scope>
    <scope>INDUCTION</scope>
</reference>
<reference key="6">
    <citation type="journal article" date="2008" name="Plant Cell">
        <title>Arabidopsis protein disulfide isomerase-5 inhibits cysteine proteases during trafficking to vacuoles before programmed cell death of the endothelium in developing seeds.</title>
        <authorList>
            <person name="Andeme Ondzighi C."/>
            <person name="Christopher D.A."/>
            <person name="Cho E.J."/>
            <person name="Chang S.C."/>
            <person name="Staehelin L.A."/>
        </authorList>
    </citation>
    <scope>FUNCTION</scope>
    <scope>INTERACTION WITH RD21A; AT3G19390 AND AT5G43060</scope>
    <scope>SUBCELLULAR LOCATION</scope>
    <scope>TISSUE SPECIFICITY</scope>
    <scope>DISRUPTION PHENOTYPE</scope>
</reference>
<reference key="7">
    <citation type="journal article" date="2010" name="BMC Plant Biol.">
        <title>The protein disulfide isomerase gene family in bread wheat (T. aestivum L.).</title>
        <authorList>
            <person name="d'Aloisio E."/>
            <person name="Paolacci A.R."/>
            <person name="Dhanapal A.P."/>
            <person name="Tanzarella O.A."/>
            <person name="Porceddu E."/>
            <person name="Ciaffi M."/>
        </authorList>
    </citation>
    <scope>GENE FAMILY</scope>
    <scope>NOMENCLATURE</scope>
</reference>
<proteinExistence type="evidence at protein level"/>
<organism>
    <name type="scientific">Arabidopsis thaliana</name>
    <name type="common">Mouse-ear cress</name>
    <dbReference type="NCBI Taxonomy" id="3702"/>
    <lineage>
        <taxon>Eukaryota</taxon>
        <taxon>Viridiplantae</taxon>
        <taxon>Streptophyta</taxon>
        <taxon>Embryophyta</taxon>
        <taxon>Tracheophyta</taxon>
        <taxon>Spermatophyta</taxon>
        <taxon>Magnoliopsida</taxon>
        <taxon>eudicotyledons</taxon>
        <taxon>Gunneridae</taxon>
        <taxon>Pentapetalae</taxon>
        <taxon>rosids</taxon>
        <taxon>malvids</taxon>
        <taxon>Brassicales</taxon>
        <taxon>Brassicaceae</taxon>
        <taxon>Camelineae</taxon>
        <taxon>Arabidopsis</taxon>
    </lineage>
</organism>
<comment type="function">
    <text evidence="6">Protein disulfide isomerase that associates with RD21A protease for trafficking from the ER through the Golgi to lytic and protein storage vacuoles of endothelial cells in developing seeds. Regulates the timing of programmed cell death (PCD) of the endothelial cells by chaperoning and inhibiting cysteine proteases during their trafficking to vacuoles.</text>
</comment>
<comment type="catalytic activity">
    <reaction>
        <text>Catalyzes the rearrangement of -S-S- bonds in proteins.</text>
        <dbReference type="EC" id="5.3.4.1"/>
    </reaction>
</comment>
<comment type="subunit">
    <text evidence="6">Interacts with RD21A, At3g19390, At5g43060.</text>
</comment>
<comment type="interaction">
    <interactant intactId="EBI-449394">
        <id>Q9XI01</id>
    </interactant>
    <interactant intactId="EBI-1993101">
        <id>P43297</id>
        <label>RD21A</label>
    </interactant>
    <organismsDiffer>false</organismsDiffer>
    <experiments>4</experiments>
</comment>
<comment type="interaction">
    <interactant intactId="EBI-449394">
        <id>Q9XI01</id>
    </interactant>
    <interactant intactId="EBI-1993115">
        <id>Q9FMH8</id>
        <label>RD21B</label>
    </interactant>
    <organismsDiffer>false</organismsDiffer>
    <experiments>3</experiments>
</comment>
<comment type="subcellular location">
    <subcellularLocation>
        <location evidence="4 6">Endoplasmic reticulum lumen</location>
    </subcellularLocation>
    <subcellularLocation>
        <location evidence="6">Vacuole</location>
    </subcellularLocation>
    <text>Found in protein storage vacuoles and lytic vacuoles in endothelial cells of developing seeds.</text>
</comment>
<comment type="alternative products">
    <event type="alternative splicing"/>
    <isoform>
        <id>Q9XI01-1</id>
        <name>1</name>
        <sequence type="displayed"/>
    </isoform>
    <text>A number of isoforms are produced. According to EST sequences.</text>
</comment>
<comment type="tissue specificity">
    <text evidence="5 6">Highly expressed in flowers, stems and immature seeds, and at lower levels in leaves and siliques (at protein level).</text>
</comment>
<comment type="developmental stage">
    <text>During embryo development, expressed exclusively in endothelial cells from the pre-embryo up to the heart stage. Expression disappears when the endothelial cells undergo PCD in the early-bent cotyledon stage (at protein level).</text>
</comment>
<comment type="induction">
    <text evidence="5">By chemically-induced ER stress response.</text>
</comment>
<comment type="disruption phenotype">
    <text evidence="6">Reduced seed set.</text>
</comment>
<comment type="similarity">
    <text evidence="7">Belongs to the protein disulfide isomerase family.</text>
</comment>